<name>2ABA_HUMAN</name>
<organism>
    <name type="scientific">Homo sapiens</name>
    <name type="common">Human</name>
    <dbReference type="NCBI Taxonomy" id="9606"/>
    <lineage>
        <taxon>Eukaryota</taxon>
        <taxon>Metazoa</taxon>
        <taxon>Chordata</taxon>
        <taxon>Craniata</taxon>
        <taxon>Vertebrata</taxon>
        <taxon>Euteleostomi</taxon>
        <taxon>Mammalia</taxon>
        <taxon>Eutheria</taxon>
        <taxon>Euarchontoglires</taxon>
        <taxon>Primates</taxon>
        <taxon>Haplorrhini</taxon>
        <taxon>Catarrhini</taxon>
        <taxon>Hominidae</taxon>
        <taxon>Homo</taxon>
    </lineage>
</organism>
<proteinExistence type="evidence at protein level"/>
<accession>P63151</accession>
<accession>B2RBU8</accession>
<accession>B4E1T7</accession>
<accession>P50409</accession>
<accession>Q00007</accession>
<comment type="function">
    <text evidence="1 3 8">Substrate-recognition subunit of protein phosphatase 2A (PP2A) that plays a key role in cell cycle by controlling mitosis entry and exit (PubMed:1849734, PubMed:33108758). Involved in chromosome clustering during late mitosis by mediating dephosphorylation of MKI67 (By similarity). Essential for serine/threonine-protein phosphatase 2A-mediated dephosphorylation of WEE1, preventing its ubiquitin-mediated proteolysis, increasing WEE1 protein levels, and promoting the G2/M checkpoint (PubMed:33108758).</text>
</comment>
<comment type="subunit">
    <text evidence="2 4 5 6 7 8 9">PP2A consists of a common heterodimeric core enzyme, composed of a 36 kDa catalytic subunit (subunit C) and a 65 kDa constant regulatory subunit (PR65 or subunit A), that associates with a variety of regulatory subunits (PubMed:38123684). Proteins that associate with the core dimer include three families of regulatory subunits B (the R2/B/PR55/B55, R3/B''/PR72/PR130/PR59 and R5/B'/B56 families), the 48 kDa variable regulatory subunit, viral proteins, and cell signaling molecules (PubMed:38123684). Interacts with the PP2A C catalytic subunit PPP2CA (PubMed:38123684). Interacts with the PP2A A subunit PPP2R1A (PubMed:38123684). Interacts with TP53 (PubMed:17245430). Interacts with IER5 (PubMed:25816751). Interacts with MFHAS1; the interaction is direct (PubMed:28609714). Interacts with PABIR1/FAM122A (via its N-terminus); the interaction is direct and inhibits PP2A activity (PubMed:27588481, PubMed:33108758, PubMed:38123684). Interacts with ARPP19; the interaction is direct and inhibits PP2A activity (PubMed:27588481, PubMed:33108758, PubMed:38123684). Interacts with CRTC3 (PubMed:30611118).</text>
</comment>
<comment type="interaction">
    <interactant intactId="EBI-1048931">
        <id>P63151</id>
    </interactant>
    <interactant intactId="EBI-77613">
        <id>P05067</id>
        <label>APP</label>
    </interactant>
    <organismsDiffer>false</organismsDiffer>
    <experiments>3</experiments>
</comment>
<comment type="interaction">
    <interactant intactId="EBI-1048931">
        <id>P63151</id>
    </interactant>
    <interactant intactId="EBI-25836642">
        <id>Q8NE08</id>
        <label>COL25A1</label>
    </interactant>
    <organismsDiffer>false</organismsDiffer>
    <experiments>3</experiments>
</comment>
<comment type="interaction">
    <interactant intactId="EBI-1048931">
        <id>P63151</id>
    </interactant>
    <interactant intactId="EBI-358616">
        <id>P53355</id>
        <label>DAPK1</label>
    </interactant>
    <organismsDiffer>false</organismsDiffer>
    <experiments>3</experiments>
</comment>
<comment type="interaction">
    <interactant intactId="EBI-1048931">
        <id>P63151</id>
    </interactant>
    <interactant intactId="EBI-8835647">
        <id>Q96IG2</id>
        <label>FBXL20</label>
    </interactant>
    <organismsDiffer>false</organismsDiffer>
    <experiments>4</experiments>
</comment>
<comment type="interaction">
    <interactant intactId="EBI-1048931">
        <id>P63151</id>
    </interactant>
    <interactant intactId="EBI-1642131">
        <id>Q9NZR2</id>
        <label>LRP1B</label>
    </interactant>
    <organismsDiffer>false</organismsDiffer>
    <experiments>3</experiments>
</comment>
<comment type="interaction">
    <interactant intactId="EBI-1048931">
        <id>P63151</id>
    </interactant>
    <interactant intactId="EBI-5323863">
        <id>Q5S007</id>
        <label>LRRK2</label>
    </interactant>
    <organismsDiffer>false</organismsDiffer>
    <experiments>4</experiments>
</comment>
<comment type="interaction">
    <interactant intactId="EBI-1048931">
        <id>P63151</id>
    </interactant>
    <interactant intactId="EBI-716247">
        <id>Q15843</id>
        <label>NEDD8</label>
    </interactant>
    <organismsDiffer>false</organismsDiffer>
    <experiments>3</experiments>
</comment>
<comment type="interaction">
    <interactant intactId="EBI-1048931">
        <id>P63151</id>
    </interactant>
    <interactant intactId="EBI-302388">
        <id>P30153</id>
        <label>PPP2R1A</label>
    </interactant>
    <organismsDiffer>false</organismsDiffer>
    <experiments>19</experiments>
</comment>
<comment type="interaction">
    <interactant intactId="EBI-1048931">
        <id>P63151</id>
    </interactant>
    <interactant intactId="EBI-357094">
        <id>P30154</id>
        <label>PPP2R1B</label>
    </interactant>
    <organismsDiffer>false</organismsDiffer>
    <experiments>5</experiments>
</comment>
<comment type="alternative products">
    <event type="alternative splicing"/>
    <isoform>
        <id>P63151-1</id>
        <name>1</name>
        <sequence type="displayed"/>
    </isoform>
    <isoform>
        <id>P63151-2</id>
        <name>2</name>
        <sequence type="described" ref="VSP_043100"/>
    </isoform>
</comment>
<comment type="tissue specificity">
    <text evidence="3">Expressed in all tissues examined.</text>
</comment>
<comment type="domain">
    <text evidence="9">Has an extended WD 2 repeat that is important for the interaction with PPP2R1A.</text>
</comment>
<comment type="similarity">
    <text evidence="12">Belongs to the phosphatase 2A regulatory subunit B family.</text>
</comment>
<dbReference type="EMBL" id="M64929">
    <property type="protein sequence ID" value="AAA36490.1"/>
    <property type="molecule type" value="mRNA"/>
</dbReference>
<dbReference type="EMBL" id="AK303981">
    <property type="protein sequence ID" value="BAG64899.1"/>
    <property type="molecule type" value="mRNA"/>
</dbReference>
<dbReference type="EMBL" id="AK314823">
    <property type="protein sequence ID" value="BAG37345.1"/>
    <property type="molecule type" value="mRNA"/>
</dbReference>
<dbReference type="EMBL" id="AC022911">
    <property type="status" value="NOT_ANNOTATED_CDS"/>
    <property type="molecule type" value="Genomic_DNA"/>
</dbReference>
<dbReference type="EMBL" id="CH471080">
    <property type="protein sequence ID" value="EAW63578.1"/>
    <property type="molecule type" value="Genomic_DNA"/>
</dbReference>
<dbReference type="EMBL" id="BC041071">
    <property type="protein sequence ID" value="AAH41071.1"/>
    <property type="molecule type" value="mRNA"/>
</dbReference>
<dbReference type="CCDS" id="CCDS34867.1">
    <molecule id="P63151-1"/>
</dbReference>
<dbReference type="CCDS" id="CCDS55213.1">
    <molecule id="P63151-2"/>
</dbReference>
<dbReference type="PIR" id="A38351">
    <property type="entry name" value="A38351"/>
</dbReference>
<dbReference type="RefSeq" id="NP_001171062.1">
    <molecule id="P63151-2"/>
    <property type="nucleotide sequence ID" value="NM_001177591.2"/>
</dbReference>
<dbReference type="RefSeq" id="NP_002708.1">
    <molecule id="P63151-1"/>
    <property type="nucleotide sequence ID" value="NM_002717.4"/>
</dbReference>
<dbReference type="PDB" id="3DW8">
    <property type="method" value="X-ray"/>
    <property type="resolution" value="2.85 A"/>
    <property type="chains" value="B/E=1-447"/>
</dbReference>
<dbReference type="PDB" id="8SO0">
    <property type="method" value="EM"/>
    <property type="resolution" value="2.80 A"/>
    <property type="chains" value="B=2-447"/>
</dbReference>
<dbReference type="PDB" id="8TTB">
    <property type="method" value="EM"/>
    <property type="resolution" value="2.77 A"/>
    <property type="chains" value="B=2-447"/>
</dbReference>
<dbReference type="PDB" id="8TWE">
    <property type="method" value="EM"/>
    <property type="resolution" value="2.55 A"/>
    <property type="chains" value="B=2-447"/>
</dbReference>
<dbReference type="PDBsum" id="3DW8"/>
<dbReference type="PDBsum" id="8SO0"/>
<dbReference type="PDBsum" id="8TTB"/>
<dbReference type="PDBsum" id="8TWE"/>
<dbReference type="EMDB" id="EMD-40644"/>
<dbReference type="EMDB" id="EMD-41604"/>
<dbReference type="EMDB" id="EMD-41667"/>
<dbReference type="SMR" id="P63151"/>
<dbReference type="BioGRID" id="111512">
    <property type="interactions" value="330"/>
</dbReference>
<dbReference type="CORUM" id="P63151"/>
<dbReference type="DIP" id="DIP-29398N"/>
<dbReference type="FunCoup" id="P63151">
    <property type="interactions" value="4161"/>
</dbReference>
<dbReference type="IntAct" id="P63151">
    <property type="interactions" value="139"/>
</dbReference>
<dbReference type="MINT" id="P63151"/>
<dbReference type="STRING" id="9606.ENSP00000325074"/>
<dbReference type="BindingDB" id="P63151"/>
<dbReference type="ChEMBL" id="CHEMBL4284"/>
<dbReference type="DrugBank" id="DB02506">
    <property type="generic name" value="2,6,8-Trimethyl-3-Amino-9-Benzyl-9-Methoxynonanoic Acid"/>
</dbReference>
<dbReference type="GlyGen" id="P63151">
    <property type="glycosylation" value="1 site, 1 O-linked glycan (1 site)"/>
</dbReference>
<dbReference type="iPTMnet" id="P63151"/>
<dbReference type="PhosphoSitePlus" id="P63151"/>
<dbReference type="SwissPalm" id="P63151"/>
<dbReference type="BioMuta" id="PPP2R2A"/>
<dbReference type="DMDM" id="52783535"/>
<dbReference type="jPOST" id="P63151"/>
<dbReference type="MassIVE" id="P63151"/>
<dbReference type="PaxDb" id="9606-ENSP00000325074"/>
<dbReference type="PeptideAtlas" id="P63151"/>
<dbReference type="PRIDE" id="P63151"/>
<dbReference type="ProteomicsDB" id="57497"/>
<dbReference type="ProteomicsDB" id="57498">
    <molecule id="P63151-2"/>
</dbReference>
<dbReference type="Pumba" id="P63151"/>
<dbReference type="Antibodypedia" id="22918">
    <property type="antibodies" value="218 antibodies from 31 providers"/>
</dbReference>
<dbReference type="DNASU" id="5520"/>
<dbReference type="Ensembl" id="ENST00000315985.7">
    <molecule id="P63151-2"/>
    <property type="protein sequence ID" value="ENSP00000325074.7"/>
    <property type="gene ID" value="ENSG00000221914.11"/>
</dbReference>
<dbReference type="Ensembl" id="ENST00000380737.8">
    <molecule id="P63151-1"/>
    <property type="protein sequence ID" value="ENSP00000370113.3"/>
    <property type="gene ID" value="ENSG00000221914.11"/>
</dbReference>
<dbReference type="GeneID" id="5520"/>
<dbReference type="KEGG" id="hsa:5520"/>
<dbReference type="MANE-Select" id="ENST00000380737.8">
    <property type="protein sequence ID" value="ENSP00000370113.3"/>
    <property type="RefSeq nucleotide sequence ID" value="NM_002717.4"/>
    <property type="RefSeq protein sequence ID" value="NP_002708.1"/>
</dbReference>
<dbReference type="UCSC" id="uc003xeu.4">
    <molecule id="P63151-1"/>
    <property type="organism name" value="human"/>
</dbReference>
<dbReference type="AGR" id="HGNC:9304"/>
<dbReference type="CTD" id="5520"/>
<dbReference type="DisGeNET" id="5520"/>
<dbReference type="GeneCards" id="PPP2R2A"/>
<dbReference type="HGNC" id="HGNC:9304">
    <property type="gene designation" value="PPP2R2A"/>
</dbReference>
<dbReference type="HPA" id="ENSG00000221914">
    <property type="expression patterns" value="Low tissue specificity"/>
</dbReference>
<dbReference type="MalaCards" id="PPP2R2A"/>
<dbReference type="MIM" id="604941">
    <property type="type" value="gene"/>
</dbReference>
<dbReference type="neXtProt" id="NX_P63151"/>
<dbReference type="OpenTargets" id="ENSG00000221914"/>
<dbReference type="PharmGKB" id="PA33668"/>
<dbReference type="VEuPathDB" id="HostDB:ENSG00000221914"/>
<dbReference type="eggNOG" id="KOG1354">
    <property type="taxonomic scope" value="Eukaryota"/>
</dbReference>
<dbReference type="GeneTree" id="ENSGT00950000182864"/>
<dbReference type="HOGENOM" id="CLU_021713_3_3_1"/>
<dbReference type="InParanoid" id="P63151"/>
<dbReference type="OMA" id="NQIKWCR"/>
<dbReference type="OrthoDB" id="6274823at2759"/>
<dbReference type="PAN-GO" id="P63151">
    <property type="GO annotations" value="3 GO annotations based on evolutionary models"/>
</dbReference>
<dbReference type="PhylomeDB" id="P63151"/>
<dbReference type="TreeFam" id="TF105553"/>
<dbReference type="PathwayCommons" id="P63151"/>
<dbReference type="Reactome" id="R-HSA-2995383">
    <property type="pathway name" value="Initiation of Nuclear Envelope (NE) Reformation"/>
</dbReference>
<dbReference type="Reactome" id="R-HSA-69231">
    <property type="pathway name" value="Cyclin D associated events in G1"/>
</dbReference>
<dbReference type="Reactome" id="R-HSA-69273">
    <property type="pathway name" value="Cyclin A/B1/B2 associated events during G2/M transition"/>
</dbReference>
<dbReference type="Reactome" id="R-HSA-975957">
    <property type="pathway name" value="Nonsense Mediated Decay (NMD) enhanced by the Exon Junction Complex (EJC)"/>
</dbReference>
<dbReference type="Reactome" id="R-HSA-9860927">
    <property type="pathway name" value="Turbulent (oscillatory, disturbed) flow shear stress activates signaling by PIEZO1 and integrins in endothelial cells"/>
</dbReference>
<dbReference type="SignaLink" id="P63151"/>
<dbReference type="SIGNOR" id="P63151"/>
<dbReference type="BioGRID-ORCS" id="5520">
    <property type="hits" value="208 hits in 1187 CRISPR screens"/>
</dbReference>
<dbReference type="ChiTaRS" id="PPP2R2A">
    <property type="organism name" value="human"/>
</dbReference>
<dbReference type="EvolutionaryTrace" id="P63151"/>
<dbReference type="GeneWiki" id="PPP2R2A"/>
<dbReference type="GenomeRNAi" id="5520"/>
<dbReference type="Pharos" id="P63151">
    <property type="development level" value="Tchem"/>
</dbReference>
<dbReference type="PRO" id="PR:P63151"/>
<dbReference type="Proteomes" id="UP000005640">
    <property type="component" value="Chromosome 8"/>
</dbReference>
<dbReference type="RNAct" id="P63151">
    <property type="molecule type" value="protein"/>
</dbReference>
<dbReference type="Bgee" id="ENSG00000221914">
    <property type="expression patterns" value="Expressed in calcaneal tendon and 206 other cell types or tissues"/>
</dbReference>
<dbReference type="ExpressionAtlas" id="P63151">
    <property type="expression patterns" value="baseline and differential"/>
</dbReference>
<dbReference type="GO" id="GO:0005829">
    <property type="term" value="C:cytosol"/>
    <property type="evidence" value="ECO:0000318"/>
    <property type="project" value="GO_Central"/>
</dbReference>
<dbReference type="GO" id="GO:0098978">
    <property type="term" value="C:glutamatergic synapse"/>
    <property type="evidence" value="ECO:0007669"/>
    <property type="project" value="Ensembl"/>
</dbReference>
<dbReference type="GO" id="GO:0005654">
    <property type="term" value="C:nucleoplasm"/>
    <property type="evidence" value="ECO:0000304"/>
    <property type="project" value="Reactome"/>
</dbReference>
<dbReference type="GO" id="GO:0000159">
    <property type="term" value="C:protein phosphatase type 2A complex"/>
    <property type="evidence" value="ECO:0000314"/>
    <property type="project" value="UniProtKB"/>
</dbReference>
<dbReference type="GO" id="GO:0140767">
    <property type="term" value="F:enzyme-substrate adaptor activity"/>
    <property type="evidence" value="ECO:0000250"/>
    <property type="project" value="UniProtKB"/>
</dbReference>
<dbReference type="GO" id="GO:0051721">
    <property type="term" value="F:protein phosphatase 2A binding"/>
    <property type="evidence" value="ECO:0007669"/>
    <property type="project" value="Ensembl"/>
</dbReference>
<dbReference type="GO" id="GO:0019888">
    <property type="term" value="F:protein phosphatase regulator activity"/>
    <property type="evidence" value="ECO:0000314"/>
    <property type="project" value="UniProtKB"/>
</dbReference>
<dbReference type="GO" id="GO:0044877">
    <property type="term" value="F:protein-containing complex binding"/>
    <property type="evidence" value="ECO:0007669"/>
    <property type="project" value="Ensembl"/>
</dbReference>
<dbReference type="GO" id="GO:0048156">
    <property type="term" value="F:tau protein binding"/>
    <property type="evidence" value="ECO:0007669"/>
    <property type="project" value="Ensembl"/>
</dbReference>
<dbReference type="GO" id="GO:0006470">
    <property type="term" value="P:protein dephosphorylation"/>
    <property type="evidence" value="ECO:0000314"/>
    <property type="project" value="UniProtKB"/>
</dbReference>
<dbReference type="GO" id="GO:0051983">
    <property type="term" value="P:regulation of chromosome segregation"/>
    <property type="evidence" value="ECO:0000250"/>
    <property type="project" value="UniProtKB"/>
</dbReference>
<dbReference type="GO" id="GO:0043278">
    <property type="term" value="P:response to morphine"/>
    <property type="evidence" value="ECO:0007669"/>
    <property type="project" value="Ensembl"/>
</dbReference>
<dbReference type="FunFam" id="2.130.10.10:FF:000002">
    <property type="entry name" value="Serine/threonine-protein phosphatase 2A 55 kDa regulatory subunit B"/>
    <property type="match status" value="1"/>
</dbReference>
<dbReference type="Gene3D" id="2.130.10.10">
    <property type="entry name" value="YVTN repeat-like/Quinoprotein amine dehydrogenase"/>
    <property type="match status" value="1"/>
</dbReference>
<dbReference type="InterPro" id="IPR000009">
    <property type="entry name" value="PP2A_PR55"/>
</dbReference>
<dbReference type="InterPro" id="IPR018067">
    <property type="entry name" value="PP2A_PR55_CS"/>
</dbReference>
<dbReference type="InterPro" id="IPR015943">
    <property type="entry name" value="WD40/YVTN_repeat-like_dom_sf"/>
</dbReference>
<dbReference type="InterPro" id="IPR036322">
    <property type="entry name" value="WD40_repeat_dom_sf"/>
</dbReference>
<dbReference type="InterPro" id="IPR001680">
    <property type="entry name" value="WD40_rpt"/>
</dbReference>
<dbReference type="PANTHER" id="PTHR11871">
    <property type="entry name" value="PROTEIN PHOSPHATASE PP2A REGULATORY SUBUNIT B"/>
    <property type="match status" value="1"/>
</dbReference>
<dbReference type="PIRSF" id="PIRSF037309">
    <property type="entry name" value="PP2A_PR55"/>
    <property type="match status" value="1"/>
</dbReference>
<dbReference type="PRINTS" id="PR00600">
    <property type="entry name" value="PP2APR55"/>
</dbReference>
<dbReference type="SMART" id="SM00320">
    <property type="entry name" value="WD40"/>
    <property type="match status" value="7"/>
</dbReference>
<dbReference type="SUPFAM" id="SSF50978">
    <property type="entry name" value="WD40 repeat-like"/>
    <property type="match status" value="1"/>
</dbReference>
<dbReference type="PROSITE" id="PS01024">
    <property type="entry name" value="PR55_1"/>
    <property type="match status" value="1"/>
</dbReference>
<dbReference type="PROSITE" id="PS01025">
    <property type="entry name" value="PR55_2"/>
    <property type="match status" value="1"/>
</dbReference>
<protein>
    <recommendedName>
        <fullName>Serine/threonine-protein phosphatase 2A 55 kDa regulatory subunit B alpha isoform</fullName>
    </recommendedName>
    <alternativeName>
        <fullName>PP2A subunit B isoform B55-alpha</fullName>
        <shortName evidence="11">B55</shortName>
    </alternativeName>
    <alternativeName>
        <fullName>PP2A subunit B isoform PR55-alpha</fullName>
    </alternativeName>
    <alternativeName>
        <fullName>PP2A subunit B isoform R2-alpha</fullName>
    </alternativeName>
    <alternativeName>
        <fullName>PP2A subunit B isoform alpha</fullName>
    </alternativeName>
</protein>
<feature type="initiator methionine" description="Removed" evidence="16 17">
    <location>
        <position position="1"/>
    </location>
</feature>
<feature type="chain" id="PRO_0000071415" description="Serine/threonine-protein phosphatase 2A 55 kDa regulatory subunit B alpha isoform">
    <location>
        <begin position="2"/>
        <end position="447"/>
    </location>
</feature>
<feature type="repeat" description="WD 1" evidence="9 13 14 15">
    <location>
        <begin position="11"/>
        <end position="80"/>
    </location>
</feature>
<feature type="repeat" description="WD 2" evidence="9 13 14 15">
    <location>
        <begin position="94"/>
        <end position="174"/>
    </location>
</feature>
<feature type="repeat" description="WD 3" evidence="9 13 14 15">
    <location>
        <begin position="175"/>
        <end position="218"/>
    </location>
</feature>
<feature type="repeat" description="WD 4" evidence="9 13 14 15">
    <location>
        <begin position="227"/>
        <end position="270"/>
    </location>
</feature>
<feature type="repeat" description="WD 5" evidence="9 13 14 15">
    <location>
        <begin position="288"/>
        <end position="325"/>
    </location>
</feature>
<feature type="repeat" description="WD 6" evidence="9 13 14 15">
    <location>
        <begin position="347"/>
        <end position="381"/>
    </location>
</feature>
<feature type="repeat" description="WD 7" evidence="9 13 14 15">
    <location>
        <begin position="414"/>
        <end position="446"/>
    </location>
</feature>
<feature type="modified residue" description="N-acetylalanine" evidence="16 17">
    <location>
        <position position="2"/>
    </location>
</feature>
<feature type="splice variant" id="VSP_043100" description="In isoform 2." evidence="10">
    <original>MA</original>
    <variation>MFPKFSLRSMFH</variation>
    <location>
        <begin position="1"/>
        <end position="2"/>
    </location>
</feature>
<feature type="strand" evidence="20">
    <location>
        <begin position="12"/>
        <end position="18"/>
    </location>
</feature>
<feature type="strand" evidence="18">
    <location>
        <begin position="21"/>
        <end position="23"/>
    </location>
</feature>
<feature type="helix" evidence="19">
    <location>
        <begin position="27"/>
        <end position="29"/>
    </location>
</feature>
<feature type="strand" evidence="20">
    <location>
        <begin position="31"/>
        <end position="36"/>
    </location>
</feature>
<feature type="strand" evidence="20">
    <location>
        <begin position="38"/>
        <end position="47"/>
    </location>
</feature>
<feature type="strand" evidence="20">
    <location>
        <begin position="50"/>
        <end position="57"/>
    </location>
</feature>
<feature type="strand" evidence="20">
    <location>
        <begin position="71"/>
        <end position="78"/>
    </location>
</feature>
<feature type="strand" evidence="20">
    <location>
        <begin position="83"/>
        <end position="85"/>
    </location>
</feature>
<feature type="turn" evidence="20">
    <location>
        <begin position="86"/>
        <end position="89"/>
    </location>
</feature>
<feature type="strand" evidence="20">
    <location>
        <begin position="90"/>
        <end position="92"/>
    </location>
</feature>
<feature type="strand" evidence="20">
    <location>
        <begin position="98"/>
        <end position="101"/>
    </location>
</feature>
<feature type="strand" evidence="20">
    <location>
        <begin position="106"/>
        <end position="114"/>
    </location>
</feature>
<feature type="strand" evidence="20">
    <location>
        <begin position="119"/>
        <end position="132"/>
    </location>
</feature>
<feature type="strand" evidence="20">
    <location>
        <begin position="135"/>
        <end position="137"/>
    </location>
</feature>
<feature type="helix" evidence="20">
    <location>
        <begin position="146"/>
        <end position="148"/>
    </location>
</feature>
<feature type="strand" evidence="20">
    <location>
        <begin position="156"/>
        <end position="172"/>
    </location>
</feature>
<feature type="strand" evidence="20">
    <location>
        <begin position="182"/>
        <end position="185"/>
    </location>
</feature>
<feature type="strand" evidence="20">
    <location>
        <begin position="189"/>
        <end position="195"/>
    </location>
</feature>
<feature type="strand" evidence="20">
    <location>
        <begin position="197"/>
        <end position="204"/>
    </location>
</feature>
<feature type="strand" evidence="20">
    <location>
        <begin position="211"/>
        <end position="216"/>
    </location>
</feature>
<feature type="helix" evidence="20">
    <location>
        <begin position="222"/>
        <end position="224"/>
    </location>
</feature>
<feature type="strand" evidence="20">
    <location>
        <begin position="229"/>
        <end position="234"/>
    </location>
</feature>
<feature type="strand" evidence="20">
    <location>
        <begin position="241"/>
        <end position="246"/>
    </location>
</feature>
<feature type="strand" evidence="20">
    <location>
        <begin position="251"/>
        <end position="255"/>
    </location>
</feature>
<feature type="turn" evidence="20">
    <location>
        <begin position="256"/>
        <end position="258"/>
    </location>
</feature>
<feature type="strand" evidence="18">
    <location>
        <begin position="260"/>
        <end position="262"/>
    </location>
</feature>
<feature type="strand" evidence="20">
    <location>
        <begin position="266"/>
        <end position="269"/>
    </location>
</feature>
<feature type="helix" evidence="20">
    <location>
        <begin position="282"/>
        <end position="285"/>
    </location>
</feature>
<feature type="strand" evidence="20">
    <location>
        <begin position="288"/>
        <end position="293"/>
    </location>
</feature>
<feature type="strand" evidence="20">
    <location>
        <begin position="297"/>
        <end position="312"/>
    </location>
</feature>
<feature type="strand" evidence="20">
    <location>
        <begin position="320"/>
        <end position="325"/>
    </location>
</feature>
<feature type="helix" evidence="20">
    <location>
        <begin position="327"/>
        <end position="329"/>
    </location>
</feature>
<feature type="turn" evidence="18">
    <location>
        <begin position="330"/>
        <end position="332"/>
    </location>
</feature>
<feature type="helix" evidence="20">
    <location>
        <begin position="333"/>
        <end position="338"/>
    </location>
</feature>
<feature type="helix" evidence="20">
    <location>
        <begin position="341"/>
        <end position="343"/>
    </location>
</feature>
<feature type="strand" evidence="20">
    <location>
        <begin position="348"/>
        <end position="350"/>
    </location>
</feature>
<feature type="strand" evidence="20">
    <location>
        <begin position="354"/>
        <end position="360"/>
    </location>
</feature>
<feature type="strand" evidence="20">
    <location>
        <begin position="365"/>
        <end position="370"/>
    </location>
</feature>
<feature type="turn" evidence="20">
    <location>
        <begin position="371"/>
        <end position="373"/>
    </location>
</feature>
<feature type="strand" evidence="20">
    <location>
        <begin position="376"/>
        <end position="380"/>
    </location>
</feature>
<feature type="helix" evidence="20">
    <location>
        <begin position="383"/>
        <end position="385"/>
    </location>
</feature>
<feature type="helix" evidence="20">
    <location>
        <begin position="410"/>
        <end position="412"/>
    </location>
</feature>
<feature type="strand" evidence="20">
    <location>
        <begin position="421"/>
        <end position="424"/>
    </location>
</feature>
<feature type="strand" evidence="20">
    <location>
        <begin position="426"/>
        <end position="434"/>
    </location>
</feature>
<feature type="strand" evidence="20">
    <location>
        <begin position="439"/>
        <end position="444"/>
    </location>
</feature>
<sequence>MAGAGGGNDIQWCFSQVKGAVDDDVAEADIISTVEFNHSGELLATGDKGGRVVIFQQEQENKIQSHSRGEYNVYSTFQSHEPEFDYLKSLEIEEKINKIRWLPQKNAAQFLLSTNDKTIKLWKISERDKRPEGYNLKEEDGRYRDPTTVTTLRVPVFRPMDLMVEASPRRIFANAHTYHINSISINSDYETYLSADDLRINLWHLEITDRSFNIVDIKPANMEELTEVITAAEFHPNSCNTFVYSSSKGTIRLCDMRASALCDRHSKLFEEPEDPSNRSFFSEIISSISDVKFSHSGRYMMTRDYLSVKIWDLNMENRPVETYQVHEYLRSKLCSLYENDCIFDKFECCWNGSDSVVMTGSYNNFFRMFDRNTKRDITLEASRENNKPRTVLKPRKVCASGKRKKDEISVDSLDFNKKILHTAWHPKENIIAVATTNNLYIFQDKVN</sequence>
<keyword id="KW-0002">3D-structure</keyword>
<keyword id="KW-0007">Acetylation</keyword>
<keyword id="KW-0025">Alternative splicing</keyword>
<keyword id="KW-1267">Proteomics identification</keyword>
<keyword id="KW-1185">Reference proteome</keyword>
<keyword id="KW-0677">Repeat</keyword>
<keyword id="KW-0853">WD repeat</keyword>
<gene>
    <name type="primary">PPP2R2A</name>
</gene>
<reference key="1">
    <citation type="journal article" date="1991" name="Biochemistry">
        <title>Structure of the 55-kDa regulatory subunit of protein phosphatase 2A: evidence for a neuronal-specific isoform.</title>
        <authorList>
            <person name="Mayer R.E."/>
            <person name="Hendrix P."/>
            <person name="Cron P."/>
            <person name="Matthies R."/>
            <person name="Stone S.R."/>
            <person name="Goris J."/>
            <person name="Merlevede W."/>
            <person name="Hofsteenge J."/>
            <person name="Hemmings B.A."/>
        </authorList>
    </citation>
    <scope>NUCLEOTIDE SEQUENCE [MRNA] (ISOFORM 1)</scope>
    <scope>FUNCTION</scope>
    <scope>TISSUE SPECIFICITY</scope>
    <source>
        <tissue>Lung fibroblast</tissue>
    </source>
</reference>
<reference key="2">
    <citation type="journal article" date="2004" name="Nat. Genet.">
        <title>Complete sequencing and characterization of 21,243 full-length human cDNAs.</title>
        <authorList>
            <person name="Ota T."/>
            <person name="Suzuki Y."/>
            <person name="Nishikawa T."/>
            <person name="Otsuki T."/>
            <person name="Sugiyama T."/>
            <person name="Irie R."/>
            <person name="Wakamatsu A."/>
            <person name="Hayashi K."/>
            <person name="Sato H."/>
            <person name="Nagai K."/>
            <person name="Kimura K."/>
            <person name="Makita H."/>
            <person name="Sekine M."/>
            <person name="Obayashi M."/>
            <person name="Nishi T."/>
            <person name="Shibahara T."/>
            <person name="Tanaka T."/>
            <person name="Ishii S."/>
            <person name="Yamamoto J."/>
            <person name="Saito K."/>
            <person name="Kawai Y."/>
            <person name="Isono Y."/>
            <person name="Nakamura Y."/>
            <person name="Nagahari K."/>
            <person name="Murakami K."/>
            <person name="Yasuda T."/>
            <person name="Iwayanagi T."/>
            <person name="Wagatsuma M."/>
            <person name="Shiratori A."/>
            <person name="Sudo H."/>
            <person name="Hosoiri T."/>
            <person name="Kaku Y."/>
            <person name="Kodaira H."/>
            <person name="Kondo H."/>
            <person name="Sugawara M."/>
            <person name="Takahashi M."/>
            <person name="Kanda K."/>
            <person name="Yokoi T."/>
            <person name="Furuya T."/>
            <person name="Kikkawa E."/>
            <person name="Omura Y."/>
            <person name="Abe K."/>
            <person name="Kamihara K."/>
            <person name="Katsuta N."/>
            <person name="Sato K."/>
            <person name="Tanikawa M."/>
            <person name="Yamazaki M."/>
            <person name="Ninomiya K."/>
            <person name="Ishibashi T."/>
            <person name="Yamashita H."/>
            <person name="Murakawa K."/>
            <person name="Fujimori K."/>
            <person name="Tanai H."/>
            <person name="Kimata M."/>
            <person name="Watanabe M."/>
            <person name="Hiraoka S."/>
            <person name="Chiba Y."/>
            <person name="Ishida S."/>
            <person name="Ono Y."/>
            <person name="Takiguchi S."/>
            <person name="Watanabe S."/>
            <person name="Yosida M."/>
            <person name="Hotuta T."/>
            <person name="Kusano J."/>
            <person name="Kanehori K."/>
            <person name="Takahashi-Fujii A."/>
            <person name="Hara H."/>
            <person name="Tanase T.-O."/>
            <person name="Nomura Y."/>
            <person name="Togiya S."/>
            <person name="Komai F."/>
            <person name="Hara R."/>
            <person name="Takeuchi K."/>
            <person name="Arita M."/>
            <person name="Imose N."/>
            <person name="Musashino K."/>
            <person name="Yuuki H."/>
            <person name="Oshima A."/>
            <person name="Sasaki N."/>
            <person name="Aotsuka S."/>
            <person name="Yoshikawa Y."/>
            <person name="Matsunawa H."/>
            <person name="Ichihara T."/>
            <person name="Shiohata N."/>
            <person name="Sano S."/>
            <person name="Moriya S."/>
            <person name="Momiyama H."/>
            <person name="Satoh N."/>
            <person name="Takami S."/>
            <person name="Terashima Y."/>
            <person name="Suzuki O."/>
            <person name="Nakagawa S."/>
            <person name="Senoh A."/>
            <person name="Mizoguchi H."/>
            <person name="Goto Y."/>
            <person name="Shimizu F."/>
            <person name="Wakebe H."/>
            <person name="Hishigaki H."/>
            <person name="Watanabe T."/>
            <person name="Sugiyama A."/>
            <person name="Takemoto M."/>
            <person name="Kawakami B."/>
            <person name="Yamazaki M."/>
            <person name="Watanabe K."/>
            <person name="Kumagai A."/>
            <person name="Itakura S."/>
            <person name="Fukuzumi Y."/>
            <person name="Fujimori Y."/>
            <person name="Komiyama M."/>
            <person name="Tashiro H."/>
            <person name="Tanigami A."/>
            <person name="Fujiwara T."/>
            <person name="Ono T."/>
            <person name="Yamada K."/>
            <person name="Fujii Y."/>
            <person name="Ozaki K."/>
            <person name="Hirao M."/>
            <person name="Ohmori Y."/>
            <person name="Kawabata A."/>
            <person name="Hikiji T."/>
            <person name="Kobatake N."/>
            <person name="Inagaki H."/>
            <person name="Ikema Y."/>
            <person name="Okamoto S."/>
            <person name="Okitani R."/>
            <person name="Kawakami T."/>
            <person name="Noguchi S."/>
            <person name="Itoh T."/>
            <person name="Shigeta K."/>
            <person name="Senba T."/>
            <person name="Matsumura K."/>
            <person name="Nakajima Y."/>
            <person name="Mizuno T."/>
            <person name="Morinaga M."/>
            <person name="Sasaki M."/>
            <person name="Togashi T."/>
            <person name="Oyama M."/>
            <person name="Hata H."/>
            <person name="Watanabe M."/>
            <person name="Komatsu T."/>
            <person name="Mizushima-Sugano J."/>
            <person name="Satoh T."/>
            <person name="Shirai Y."/>
            <person name="Takahashi Y."/>
            <person name="Nakagawa K."/>
            <person name="Okumura K."/>
            <person name="Nagase T."/>
            <person name="Nomura N."/>
            <person name="Kikuchi H."/>
            <person name="Masuho Y."/>
            <person name="Yamashita R."/>
            <person name="Nakai K."/>
            <person name="Yada T."/>
            <person name="Nakamura Y."/>
            <person name="Ohara O."/>
            <person name="Isogai T."/>
            <person name="Sugano S."/>
        </authorList>
    </citation>
    <scope>NUCLEOTIDE SEQUENCE [LARGE SCALE MRNA] (ISOFORMS 1 AND 2)</scope>
    <source>
        <tissue>Brain</tissue>
        <tissue>Trachea</tissue>
    </source>
</reference>
<reference key="3">
    <citation type="journal article" date="2006" name="Nature">
        <title>DNA sequence and analysis of human chromosome 8.</title>
        <authorList>
            <person name="Nusbaum C."/>
            <person name="Mikkelsen T.S."/>
            <person name="Zody M.C."/>
            <person name="Asakawa S."/>
            <person name="Taudien S."/>
            <person name="Garber M."/>
            <person name="Kodira C.D."/>
            <person name="Schueler M.G."/>
            <person name="Shimizu A."/>
            <person name="Whittaker C.A."/>
            <person name="Chang J.L."/>
            <person name="Cuomo C.A."/>
            <person name="Dewar K."/>
            <person name="FitzGerald M.G."/>
            <person name="Yang X."/>
            <person name="Allen N.R."/>
            <person name="Anderson S."/>
            <person name="Asakawa T."/>
            <person name="Blechschmidt K."/>
            <person name="Bloom T."/>
            <person name="Borowsky M.L."/>
            <person name="Butler J."/>
            <person name="Cook A."/>
            <person name="Corum B."/>
            <person name="DeArellano K."/>
            <person name="DeCaprio D."/>
            <person name="Dooley K.T."/>
            <person name="Dorris L. III"/>
            <person name="Engels R."/>
            <person name="Gloeckner G."/>
            <person name="Hafez N."/>
            <person name="Hagopian D.S."/>
            <person name="Hall J.L."/>
            <person name="Ishikawa S.K."/>
            <person name="Jaffe D.B."/>
            <person name="Kamat A."/>
            <person name="Kudoh J."/>
            <person name="Lehmann R."/>
            <person name="Lokitsang T."/>
            <person name="Macdonald P."/>
            <person name="Major J.E."/>
            <person name="Matthews C.D."/>
            <person name="Mauceli E."/>
            <person name="Menzel U."/>
            <person name="Mihalev A.H."/>
            <person name="Minoshima S."/>
            <person name="Murayama Y."/>
            <person name="Naylor J.W."/>
            <person name="Nicol R."/>
            <person name="Nguyen C."/>
            <person name="O'Leary S.B."/>
            <person name="O'Neill K."/>
            <person name="Parker S.C.J."/>
            <person name="Polley A."/>
            <person name="Raymond C.K."/>
            <person name="Reichwald K."/>
            <person name="Rodriguez J."/>
            <person name="Sasaki T."/>
            <person name="Schilhabel M."/>
            <person name="Siddiqui R."/>
            <person name="Smith C.L."/>
            <person name="Sneddon T.P."/>
            <person name="Talamas J.A."/>
            <person name="Tenzin P."/>
            <person name="Topham K."/>
            <person name="Venkataraman V."/>
            <person name="Wen G."/>
            <person name="Yamazaki S."/>
            <person name="Young S.K."/>
            <person name="Zeng Q."/>
            <person name="Zimmer A.R."/>
            <person name="Rosenthal A."/>
            <person name="Birren B.W."/>
            <person name="Platzer M."/>
            <person name="Shimizu N."/>
            <person name="Lander E.S."/>
        </authorList>
    </citation>
    <scope>NUCLEOTIDE SEQUENCE [LARGE SCALE GENOMIC DNA]</scope>
</reference>
<reference key="4">
    <citation type="submission" date="2005-09" db="EMBL/GenBank/DDBJ databases">
        <authorList>
            <person name="Mural R.J."/>
            <person name="Istrail S."/>
            <person name="Sutton G.G."/>
            <person name="Florea L."/>
            <person name="Halpern A.L."/>
            <person name="Mobarry C.M."/>
            <person name="Lippert R."/>
            <person name="Walenz B."/>
            <person name="Shatkay H."/>
            <person name="Dew I."/>
            <person name="Miller J.R."/>
            <person name="Flanigan M.J."/>
            <person name="Edwards N.J."/>
            <person name="Bolanos R."/>
            <person name="Fasulo D."/>
            <person name="Halldorsson B.V."/>
            <person name="Hannenhalli S."/>
            <person name="Turner R."/>
            <person name="Yooseph S."/>
            <person name="Lu F."/>
            <person name="Nusskern D.R."/>
            <person name="Shue B.C."/>
            <person name="Zheng X.H."/>
            <person name="Zhong F."/>
            <person name="Delcher A.L."/>
            <person name="Huson D.H."/>
            <person name="Kravitz S.A."/>
            <person name="Mouchard L."/>
            <person name="Reinert K."/>
            <person name="Remington K.A."/>
            <person name="Clark A.G."/>
            <person name="Waterman M.S."/>
            <person name="Eichler E.E."/>
            <person name="Adams M.D."/>
            <person name="Hunkapiller M.W."/>
            <person name="Myers E.W."/>
            <person name="Venter J.C."/>
        </authorList>
    </citation>
    <scope>NUCLEOTIDE SEQUENCE [LARGE SCALE GENOMIC DNA]</scope>
</reference>
<reference key="5">
    <citation type="journal article" date="2004" name="Genome Res.">
        <title>The status, quality, and expansion of the NIH full-length cDNA project: the Mammalian Gene Collection (MGC).</title>
        <authorList>
            <consortium name="The MGC Project Team"/>
        </authorList>
    </citation>
    <scope>NUCLEOTIDE SEQUENCE [LARGE SCALE MRNA] (ISOFORM 1)</scope>
    <source>
        <tissue>Blood</tissue>
    </source>
</reference>
<reference key="6">
    <citation type="journal article" date="2007" name="EMBO J.">
        <title>A specific PP2A regulatory subunit, B56gamma, mediates DNA damage-induced dephosphorylation of p53 at Thr55.</title>
        <authorList>
            <person name="Li H.H."/>
            <person name="Cai X."/>
            <person name="Shouse G.P."/>
            <person name="Piluso L.G."/>
            <person name="Liu X."/>
        </authorList>
    </citation>
    <scope>INTERACTION WITH TP53</scope>
</reference>
<reference key="7">
    <citation type="journal article" date="2009" name="Anal. Chem.">
        <title>Lys-N and trypsin cover complementary parts of the phosphoproteome in a refined SCX-based approach.</title>
        <authorList>
            <person name="Gauci S."/>
            <person name="Helbig A.O."/>
            <person name="Slijper M."/>
            <person name="Krijgsveld J."/>
            <person name="Heck A.J."/>
            <person name="Mohammed S."/>
        </authorList>
    </citation>
    <scope>ACETYLATION [LARGE SCALE ANALYSIS] AT ALA-2</scope>
    <scope>CLEAVAGE OF INITIATOR METHIONINE [LARGE SCALE ANALYSIS]</scope>
    <scope>IDENTIFICATION BY MASS SPECTROMETRY [LARGE SCALE ANALYSIS]</scope>
</reference>
<reference key="8">
    <citation type="journal article" date="2011" name="BMC Syst. Biol.">
        <title>Initial characterization of the human central proteome.</title>
        <authorList>
            <person name="Burkard T.R."/>
            <person name="Planyavsky M."/>
            <person name="Kaupe I."/>
            <person name="Breitwieser F.P."/>
            <person name="Buerckstuemmer T."/>
            <person name="Bennett K.L."/>
            <person name="Superti-Furga G."/>
            <person name="Colinge J."/>
        </authorList>
    </citation>
    <scope>IDENTIFICATION BY MASS SPECTROMETRY [LARGE SCALE ANALYSIS]</scope>
</reference>
<reference key="9">
    <citation type="journal article" date="2012" name="Mol. Cell. Proteomics">
        <title>Comparative large-scale characterisation of plant vs. mammal proteins reveals similar and idiosyncratic N-alpha acetylation features.</title>
        <authorList>
            <person name="Bienvenut W.V."/>
            <person name="Sumpton D."/>
            <person name="Martinez A."/>
            <person name="Lilla S."/>
            <person name="Espagne C."/>
            <person name="Meinnel T."/>
            <person name="Giglione C."/>
        </authorList>
    </citation>
    <scope>ACETYLATION [LARGE SCALE ANALYSIS] AT ALA-2</scope>
    <scope>CLEAVAGE OF INITIATOR METHIONINE [LARGE SCALE ANALYSIS]</scope>
    <scope>IDENTIFICATION BY MASS SPECTROMETRY [LARGE SCALE ANALYSIS]</scope>
</reference>
<reference key="10">
    <citation type="journal article" date="2014" name="J. Proteomics">
        <title>An enzyme assisted RP-RPLC approach for in-depth analysis of human liver phosphoproteome.</title>
        <authorList>
            <person name="Bian Y."/>
            <person name="Song C."/>
            <person name="Cheng K."/>
            <person name="Dong M."/>
            <person name="Wang F."/>
            <person name="Huang J."/>
            <person name="Sun D."/>
            <person name="Wang L."/>
            <person name="Ye M."/>
            <person name="Zou H."/>
        </authorList>
    </citation>
    <scope>IDENTIFICATION BY MASS SPECTROMETRY [LARGE SCALE ANALYSIS]</scope>
    <source>
        <tissue>Liver</tissue>
    </source>
</reference>
<reference key="11">
    <citation type="journal article" date="2015" name="FEBS Lett.">
        <title>HSF1 transcriptional activity is modulated by IER5 and PP2A/B55.</title>
        <authorList>
            <person name="Ishikawa Y."/>
            <person name="Kawabata S."/>
            <person name="Sakurai H."/>
        </authorList>
    </citation>
    <scope>INTERACTION WITH IER5</scope>
</reference>
<reference key="12">
    <citation type="journal article" date="2016" name="Oncotarget">
        <title>FAM122A, a new endogenous inhibitor of protein phosphatase 2A.</title>
        <authorList>
            <person name="Fan L."/>
            <person name="Liu M.H."/>
            <person name="Guo M."/>
            <person name="Hu C.X."/>
            <person name="Yan Z.W."/>
            <person name="Chen J."/>
            <person name="Chen G.Q."/>
            <person name="Huang Y."/>
        </authorList>
    </citation>
    <scope>INTERACTION WITH PABIR1</scope>
</reference>
<reference key="13">
    <citation type="journal article" date="2017" name="Mol. Immunol.">
        <title>MFHAS1 suppresses TLR4 signaling pathway via induction of PP2A C subunit cytoplasm translocation and inhibition of c-Jun dephosphorylation at Thr239.</title>
        <authorList>
            <person name="Shi Q."/>
            <person name="Xiong B."/>
            <person name="Zhong J."/>
            <person name="Wang H."/>
            <person name="Ma D."/>
            <person name="Miao C."/>
        </authorList>
    </citation>
    <scope>INTERACTION WITH MFHAS1</scope>
</reference>
<reference key="14">
    <citation type="journal article" date="2018" name="IScience">
        <title>Mitogenic Signals Stimulate the CREB Coactivator CRTC3 through PP2A Recruitment.</title>
        <authorList>
            <person name="Sonntag T."/>
            <person name="Ostojic J."/>
            <person name="Vaughan J.M."/>
            <person name="Moresco J.J."/>
            <person name="Yoon Y.S."/>
            <person name="Yates J.R. III"/>
            <person name="Montminy M."/>
        </authorList>
    </citation>
    <scope>INTERACTION WITH CRTC3</scope>
</reference>
<reference key="15">
    <citation type="journal article" date="2020" name="Mol. Cell">
        <title>CHK1 Inhibitor Blocks Phosphorylation of FAM122A and Promotes Replication Stress.</title>
        <authorList>
            <person name="Li F."/>
            <person name="Kozono D."/>
            <person name="Deraska P."/>
            <person name="Branigan T."/>
            <person name="Dunn C."/>
            <person name="Zheng X.F."/>
            <person name="Parmar K."/>
            <person name="Nguyen H."/>
            <person name="DeCaprio J."/>
            <person name="Shapiro G.I."/>
            <person name="Chowdhury D."/>
            <person name="D'Andrea A.D."/>
        </authorList>
    </citation>
    <scope>FUNCTION</scope>
    <scope>INTERACTION WITH PABIR1</scope>
</reference>
<reference evidence="13 14 15" key="16">
    <citation type="journal article" date="2024" name="Nature">
        <title>Cryo-EM structures of PP2A:B55-FAM122A and PP2A:B55-ARPP19.</title>
        <authorList>
            <person name="Padi S.K.R."/>
            <person name="Vos M.R."/>
            <person name="Godek R.J."/>
            <person name="Fuller J.R."/>
            <person name="Kruse T."/>
            <person name="Hein J.B."/>
            <person name="Nilsson J."/>
            <person name="Kelker M.S."/>
            <person name="Page R."/>
            <person name="Peti W."/>
        </authorList>
    </citation>
    <scope>STRUCTURE BY ELECTRON MICROSCOPY (2.55 ANGSTROMS) OF 2-447 IN COMPLEXES WITH PPP2CA; PPP2R1A; ARPP19 AND PABIR1/FAM122A</scope>
    <scope>INTERACTION WITH PPP2CA; PPP2R1A; ARPP19 AND PABIR1/FAM122A</scope>
    <scope>DOMAIN</scope>
    <scope>WD REPEATS</scope>
</reference>
<evidence type="ECO:0000250" key="1">
    <source>
        <dbReference type="UniProtKB" id="Q6P1F6"/>
    </source>
</evidence>
<evidence type="ECO:0000269" key="2">
    <source>
    </source>
</evidence>
<evidence type="ECO:0000269" key="3">
    <source>
    </source>
</evidence>
<evidence type="ECO:0000269" key="4">
    <source>
    </source>
</evidence>
<evidence type="ECO:0000269" key="5">
    <source>
    </source>
</evidence>
<evidence type="ECO:0000269" key="6">
    <source>
    </source>
</evidence>
<evidence type="ECO:0000269" key="7">
    <source>
    </source>
</evidence>
<evidence type="ECO:0000269" key="8">
    <source>
    </source>
</evidence>
<evidence type="ECO:0000269" key="9">
    <source>
    </source>
</evidence>
<evidence type="ECO:0000303" key="10">
    <source>
    </source>
</evidence>
<evidence type="ECO:0000303" key="11">
    <source>
    </source>
</evidence>
<evidence type="ECO:0000305" key="12"/>
<evidence type="ECO:0007744" key="13">
    <source>
        <dbReference type="PDB" id="8SO0"/>
    </source>
</evidence>
<evidence type="ECO:0007744" key="14">
    <source>
        <dbReference type="PDB" id="8TTB"/>
    </source>
</evidence>
<evidence type="ECO:0007744" key="15">
    <source>
        <dbReference type="PDB" id="8TWE"/>
    </source>
</evidence>
<evidence type="ECO:0007744" key="16">
    <source>
    </source>
</evidence>
<evidence type="ECO:0007744" key="17">
    <source>
    </source>
</evidence>
<evidence type="ECO:0007829" key="18">
    <source>
        <dbReference type="PDB" id="3DW8"/>
    </source>
</evidence>
<evidence type="ECO:0007829" key="19">
    <source>
        <dbReference type="PDB" id="8TTB"/>
    </source>
</evidence>
<evidence type="ECO:0007829" key="20">
    <source>
        <dbReference type="PDB" id="8TWE"/>
    </source>
</evidence>